<evidence type="ECO:0000255" key="1">
    <source>
        <dbReference type="PROSITE-ProRule" id="PRU00251"/>
    </source>
</evidence>
<evidence type="ECO:0000255" key="2">
    <source>
        <dbReference type="PROSITE-ProRule" id="PRU00629"/>
    </source>
</evidence>
<evidence type="ECO:0000269" key="3">
    <source>
    </source>
</evidence>
<evidence type="ECO:0000269" key="4">
    <source>
    </source>
</evidence>
<evidence type="ECO:0000269" key="5">
    <source>
    </source>
</evidence>
<evidence type="ECO:0000269" key="6">
    <source>
    </source>
</evidence>
<evidence type="ECO:0000303" key="7">
    <source>
    </source>
</evidence>
<evidence type="ECO:0000303" key="8">
    <source ref="2"/>
</evidence>
<evidence type="ECO:0000305" key="9"/>
<keyword id="KW-0010">Activator</keyword>
<keyword id="KW-0025">Alternative splicing</keyword>
<keyword id="KW-0217">Developmental protein</keyword>
<keyword id="KW-0221">Differentiation</keyword>
<keyword id="KW-0238">DNA-binding</keyword>
<keyword id="KW-0287">Flowering</keyword>
<keyword id="KW-0539">Nucleus</keyword>
<keyword id="KW-1185">Reference proteome</keyword>
<keyword id="KW-0804">Transcription</keyword>
<keyword id="KW-0805">Transcription regulation</keyword>
<reference key="1">
    <citation type="journal article" date="1995" name="Plant Mol. Biol.">
        <title>Phenotypic alterations of petal and sepal by ectopic expression of a rice MADS box gene in tobacco.</title>
        <authorList>
            <person name="Kang H.-G."/>
            <person name="Noh Y.-S."/>
            <person name="Chung Y.-Y."/>
            <person name="Costa M.A."/>
            <person name="An K."/>
            <person name="An G."/>
        </authorList>
    </citation>
    <scope>NUCLEOTIDE SEQUENCE [MRNA] (ISOFORM 1)</scope>
    <source>
        <tissue>Flower</tissue>
    </source>
</reference>
<reference key="2">
    <citation type="submission" date="2004-02" db="EMBL/GenBank/DDBJ databases">
        <title>Molecular and phylogenetic analyses of the complete MADS-box transcription factor family in rice.</title>
        <authorList>
            <person name="Yao Q."/>
            <person name="Peng R."/>
            <person name="Xiong A."/>
        </authorList>
    </citation>
    <scope>NUCLEOTIDE SEQUENCE [MRNA] (ISOFORM 2)</scope>
</reference>
<reference key="3">
    <citation type="journal article" date="2002" name="Nature">
        <title>The genome sequence and structure of rice chromosome 1.</title>
        <authorList>
            <person name="Sasaki T."/>
            <person name="Matsumoto T."/>
            <person name="Yamamoto K."/>
            <person name="Sakata K."/>
            <person name="Baba T."/>
            <person name="Katayose Y."/>
            <person name="Wu J."/>
            <person name="Niimura Y."/>
            <person name="Cheng Z."/>
            <person name="Nagamura Y."/>
            <person name="Antonio B.A."/>
            <person name="Kanamori H."/>
            <person name="Hosokawa S."/>
            <person name="Masukawa M."/>
            <person name="Arikawa K."/>
            <person name="Chiden Y."/>
            <person name="Hayashi M."/>
            <person name="Okamoto M."/>
            <person name="Ando T."/>
            <person name="Aoki H."/>
            <person name="Arita K."/>
            <person name="Hamada M."/>
            <person name="Harada C."/>
            <person name="Hijishita S."/>
            <person name="Honda M."/>
            <person name="Ichikawa Y."/>
            <person name="Idonuma A."/>
            <person name="Iijima M."/>
            <person name="Ikeda M."/>
            <person name="Ikeno M."/>
            <person name="Ito S."/>
            <person name="Ito T."/>
            <person name="Ito Y."/>
            <person name="Ito Y."/>
            <person name="Iwabuchi A."/>
            <person name="Kamiya K."/>
            <person name="Karasawa W."/>
            <person name="Katagiri S."/>
            <person name="Kikuta A."/>
            <person name="Kobayashi N."/>
            <person name="Kono I."/>
            <person name="Machita K."/>
            <person name="Maehara T."/>
            <person name="Mizuno H."/>
            <person name="Mizubayashi T."/>
            <person name="Mukai Y."/>
            <person name="Nagasaki H."/>
            <person name="Nakashima M."/>
            <person name="Nakama Y."/>
            <person name="Nakamichi Y."/>
            <person name="Nakamura M."/>
            <person name="Namiki N."/>
            <person name="Negishi M."/>
            <person name="Ohta I."/>
            <person name="Ono N."/>
            <person name="Saji S."/>
            <person name="Sakai K."/>
            <person name="Shibata M."/>
            <person name="Shimokawa T."/>
            <person name="Shomura A."/>
            <person name="Song J."/>
            <person name="Takazaki Y."/>
            <person name="Terasawa K."/>
            <person name="Tsuji K."/>
            <person name="Waki K."/>
            <person name="Yamagata H."/>
            <person name="Yamane H."/>
            <person name="Yoshiki S."/>
            <person name="Yoshihara R."/>
            <person name="Yukawa K."/>
            <person name="Zhong H."/>
            <person name="Iwama H."/>
            <person name="Endo T."/>
            <person name="Ito H."/>
            <person name="Hahn J.H."/>
            <person name="Kim H.-I."/>
            <person name="Eun M.-Y."/>
            <person name="Yano M."/>
            <person name="Jiang J."/>
            <person name="Gojobori T."/>
        </authorList>
    </citation>
    <scope>NUCLEOTIDE SEQUENCE [LARGE SCALE GENOMIC DNA]</scope>
    <source>
        <strain>cv. Nipponbare</strain>
    </source>
</reference>
<reference key="4">
    <citation type="journal article" date="2005" name="Nature">
        <title>The map-based sequence of the rice genome.</title>
        <authorList>
            <consortium name="International rice genome sequencing project (IRGSP)"/>
        </authorList>
    </citation>
    <scope>NUCLEOTIDE SEQUENCE [LARGE SCALE GENOMIC DNA]</scope>
    <source>
        <strain>cv. Nipponbare</strain>
    </source>
</reference>
<reference key="5">
    <citation type="journal article" date="2013" name="Rice">
        <title>Improvement of the Oryza sativa Nipponbare reference genome using next generation sequence and optical map data.</title>
        <authorList>
            <person name="Kawahara Y."/>
            <person name="de la Bastide M."/>
            <person name="Hamilton J.P."/>
            <person name="Kanamori H."/>
            <person name="McCombie W.R."/>
            <person name="Ouyang S."/>
            <person name="Schwartz D.C."/>
            <person name="Tanaka T."/>
            <person name="Wu J."/>
            <person name="Zhou S."/>
            <person name="Childs K.L."/>
            <person name="Davidson R.M."/>
            <person name="Lin H."/>
            <person name="Quesada-Ocampo L."/>
            <person name="Vaillancourt B."/>
            <person name="Sakai H."/>
            <person name="Lee S.S."/>
            <person name="Kim J."/>
            <person name="Numa H."/>
            <person name="Itoh T."/>
            <person name="Buell C.R."/>
            <person name="Matsumoto T."/>
        </authorList>
    </citation>
    <scope>GENOME REANNOTATION</scope>
    <source>
        <strain>cv. Nipponbare</strain>
    </source>
</reference>
<reference key="6">
    <citation type="journal article" date="2003" name="Science">
        <title>Collection, mapping, and annotation of over 28,000 cDNA clones from japonica rice.</title>
        <authorList>
            <consortium name="The rice full-length cDNA consortium"/>
        </authorList>
    </citation>
    <scope>NUCLEOTIDE SEQUENCE [LARGE SCALE MRNA] (ISOFORM 3)</scope>
    <source>
        <strain>cv. Nipponbare</strain>
    </source>
</reference>
<reference key="7">
    <citation type="journal article" date="1998" name="Plant Mol. Biol.">
        <title>Identification of class B and class C floral organ identity genes from rice plants.</title>
        <authorList>
            <person name="Kang H.-G."/>
            <person name="Jeon J.-S."/>
            <person name="Lee S."/>
            <person name="An G."/>
        </authorList>
    </citation>
    <scope>FUNCTION</scope>
</reference>
<reference key="8">
    <citation type="journal article" date="2000" name="Plant Cell Physiol.">
        <title>Spatially and temporally regulated expression of rice MADS box genes with similarity to Arabidopsis class A, B and C genes.</title>
        <authorList>
            <person name="Kyozuka J."/>
            <person name="Kobayashi T."/>
            <person name="Morita M."/>
            <person name="Shimamoto K."/>
        </authorList>
    </citation>
    <scope>TISSUE SPECIFICITY</scope>
    <scope>DEVELOPMENTAL STAGE</scope>
</reference>
<reference key="9">
    <citation type="journal article" date="2002" name="Plant Cell Physiol.">
        <title>Ectopic expression of OsMADS3, a rice ortholog of AGAMOUS, caused a homeotic transformation of lodicules to stamens in transgenic rice plants.</title>
        <authorList>
            <person name="Kyozuka J."/>
            <person name="Shimamoto K."/>
        </authorList>
    </citation>
    <scope>FUNCTION</scope>
</reference>
<reference key="10">
    <citation type="journal article" date="2006" name="Plant Cell">
        <title>Functional diversification of the two C-class MADS box genes OSMADS3 and OSMADS58 in Oryza sativa.</title>
        <authorList>
            <person name="Yamaguchi T."/>
            <person name="Lee D.-Y."/>
            <person name="Miyao A."/>
            <person name="Hirochika H."/>
            <person name="An G."/>
            <person name="Hirano H."/>
        </authorList>
    </citation>
    <scope>FUNCTION</scope>
    <scope>DISRUPTION PHENOTYPE</scope>
    <scope>DEVELOPMENTAL STAGE</scope>
</reference>
<proteinExistence type="evidence at transcript level"/>
<gene>
    <name type="primary">MADS3</name>
    <name type="synonym">RAG</name>
    <name type="ordered locus">Os01g0201700</name>
    <name type="ordered locus">LOC_Os01g10504</name>
</gene>
<accession>Q40704</accession>
<accession>Q6Q7W1</accession>
<protein>
    <recommendedName>
        <fullName>MADS-box transcription factor 3</fullName>
    </recommendedName>
    <alternativeName>
        <fullName>OsMADS3</fullName>
    </alternativeName>
    <alternativeName>
        <fullName>Protein AGAMOUS-like</fullName>
    </alternativeName>
    <alternativeName>
        <fullName>RMADS222</fullName>
    </alternativeName>
</protein>
<organism>
    <name type="scientific">Oryza sativa subsp. japonica</name>
    <name type="common">Rice</name>
    <dbReference type="NCBI Taxonomy" id="39947"/>
    <lineage>
        <taxon>Eukaryota</taxon>
        <taxon>Viridiplantae</taxon>
        <taxon>Streptophyta</taxon>
        <taxon>Embryophyta</taxon>
        <taxon>Tracheophyta</taxon>
        <taxon>Spermatophyta</taxon>
        <taxon>Magnoliopsida</taxon>
        <taxon>Liliopsida</taxon>
        <taxon>Poales</taxon>
        <taxon>Poaceae</taxon>
        <taxon>BOP clade</taxon>
        <taxon>Oryzoideae</taxon>
        <taxon>Oryzeae</taxon>
        <taxon>Oryzinae</taxon>
        <taxon>Oryza</taxon>
        <taxon>Oryza sativa</taxon>
    </lineage>
</organism>
<name>MADS3_ORYSJ</name>
<feature type="chain" id="PRO_0000229893" description="MADS-box transcription factor 3">
    <location>
        <begin position="1"/>
        <end position="236"/>
    </location>
</feature>
<feature type="domain" description="MADS-box" evidence="1">
    <location>
        <begin position="1"/>
        <end position="61"/>
    </location>
</feature>
<feature type="domain" description="K-box" evidence="2">
    <location>
        <begin position="87"/>
        <end position="178"/>
    </location>
</feature>
<feature type="splice variant" id="VSP_017777" description="In isoform 3." evidence="7">
    <original>RTIVG</original>
    <variation>LTRLA</variation>
    <location>
        <begin position="110"/>
        <end position="114"/>
    </location>
</feature>
<feature type="splice variant" id="VSP_017778" description="In isoform 3." evidence="7">
    <location>
        <begin position="115"/>
        <end position="236"/>
    </location>
</feature>
<feature type="splice variant" id="VSP_017779" description="In isoform 2." evidence="8">
    <original>QQPAFN</original>
    <variation>SRPSISFGVDTVRTHVR</variation>
    <location>
        <begin position="231"/>
        <end position="236"/>
    </location>
</feature>
<dbReference type="EMBL" id="L37528">
    <property type="protein sequence ID" value="AAA99964.1"/>
    <property type="molecule type" value="mRNA"/>
</dbReference>
<dbReference type="EMBL" id="AY553724">
    <property type="protein sequence ID" value="AAS60204.1"/>
    <property type="molecule type" value="mRNA"/>
</dbReference>
<dbReference type="EMBL" id="AP003105">
    <property type="status" value="NOT_ANNOTATED_CDS"/>
    <property type="molecule type" value="Genomic_DNA"/>
</dbReference>
<dbReference type="EMBL" id="AP014957">
    <property type="status" value="NOT_ANNOTATED_CDS"/>
    <property type="molecule type" value="Genomic_DNA"/>
</dbReference>
<dbReference type="EMBL" id="AK108568">
    <property type="status" value="NOT_ANNOTATED_CDS"/>
    <property type="molecule type" value="mRNA"/>
</dbReference>
<dbReference type="PIR" id="S59480">
    <property type="entry name" value="S59480"/>
</dbReference>
<dbReference type="SMR" id="Q40704"/>
<dbReference type="FunCoup" id="Q40704">
    <property type="interactions" value="55"/>
</dbReference>
<dbReference type="IntAct" id="Q40704">
    <property type="interactions" value="3"/>
</dbReference>
<dbReference type="STRING" id="39947.Q40704"/>
<dbReference type="PaxDb" id="39947-Q40704"/>
<dbReference type="eggNOG" id="KOG0014">
    <property type="taxonomic scope" value="Eukaryota"/>
</dbReference>
<dbReference type="InParanoid" id="Q40704"/>
<dbReference type="PlantReactome" id="R-OSA-9609102">
    <property type="pathway name" value="Flower development"/>
</dbReference>
<dbReference type="Proteomes" id="UP000000763">
    <property type="component" value="Chromosome 1"/>
</dbReference>
<dbReference type="Proteomes" id="UP000059680">
    <property type="component" value="Chromosome 1"/>
</dbReference>
<dbReference type="GO" id="GO:0005634">
    <property type="term" value="C:nucleus"/>
    <property type="evidence" value="ECO:0007669"/>
    <property type="project" value="UniProtKB-SubCell"/>
</dbReference>
<dbReference type="GO" id="GO:0000981">
    <property type="term" value="F:DNA-binding transcription factor activity, RNA polymerase II-specific"/>
    <property type="evidence" value="ECO:0000318"/>
    <property type="project" value="GO_Central"/>
</dbReference>
<dbReference type="GO" id="GO:0046983">
    <property type="term" value="F:protein dimerization activity"/>
    <property type="evidence" value="ECO:0007669"/>
    <property type="project" value="InterPro"/>
</dbReference>
<dbReference type="GO" id="GO:0000978">
    <property type="term" value="F:RNA polymerase II cis-regulatory region sequence-specific DNA binding"/>
    <property type="evidence" value="ECO:0000318"/>
    <property type="project" value="GO_Central"/>
</dbReference>
<dbReference type="GO" id="GO:0030154">
    <property type="term" value="P:cell differentiation"/>
    <property type="evidence" value="ECO:0007669"/>
    <property type="project" value="UniProtKB-KW"/>
</dbReference>
<dbReference type="GO" id="GO:0045944">
    <property type="term" value="P:positive regulation of transcription by RNA polymerase II"/>
    <property type="evidence" value="ECO:0007669"/>
    <property type="project" value="InterPro"/>
</dbReference>
<dbReference type="GO" id="GO:0006357">
    <property type="term" value="P:regulation of transcription by RNA polymerase II"/>
    <property type="evidence" value="ECO:0000318"/>
    <property type="project" value="GO_Central"/>
</dbReference>
<dbReference type="GO" id="GO:0010097">
    <property type="term" value="P:specification of stamen identity"/>
    <property type="evidence" value="ECO:0000304"/>
    <property type="project" value="AgBase"/>
</dbReference>
<dbReference type="CDD" id="cd00265">
    <property type="entry name" value="MADS_MEF2_like"/>
    <property type="match status" value="1"/>
</dbReference>
<dbReference type="FunFam" id="3.40.1810.10:FF:000009">
    <property type="entry name" value="agamous-like MADS-box protein AGL11"/>
    <property type="match status" value="1"/>
</dbReference>
<dbReference type="Gene3D" id="3.40.1810.10">
    <property type="entry name" value="Transcription factor, MADS-box"/>
    <property type="match status" value="1"/>
</dbReference>
<dbReference type="InterPro" id="IPR050142">
    <property type="entry name" value="MADS-box/MEF2_TF"/>
</dbReference>
<dbReference type="InterPro" id="IPR033896">
    <property type="entry name" value="MEF2-like_N"/>
</dbReference>
<dbReference type="InterPro" id="IPR002487">
    <property type="entry name" value="TF_Kbox"/>
</dbReference>
<dbReference type="InterPro" id="IPR002100">
    <property type="entry name" value="TF_MADSbox"/>
</dbReference>
<dbReference type="InterPro" id="IPR036879">
    <property type="entry name" value="TF_MADSbox_sf"/>
</dbReference>
<dbReference type="PANTHER" id="PTHR48019">
    <property type="entry name" value="SERUM RESPONSE FACTOR HOMOLOG"/>
    <property type="match status" value="1"/>
</dbReference>
<dbReference type="Pfam" id="PF01486">
    <property type="entry name" value="K-box"/>
    <property type="match status" value="1"/>
</dbReference>
<dbReference type="Pfam" id="PF00319">
    <property type="entry name" value="SRF-TF"/>
    <property type="match status" value="1"/>
</dbReference>
<dbReference type="PRINTS" id="PR00404">
    <property type="entry name" value="MADSDOMAIN"/>
</dbReference>
<dbReference type="SMART" id="SM00432">
    <property type="entry name" value="MADS"/>
    <property type="match status" value="1"/>
</dbReference>
<dbReference type="SUPFAM" id="SSF55455">
    <property type="entry name" value="SRF-like"/>
    <property type="match status" value="1"/>
</dbReference>
<dbReference type="PROSITE" id="PS51297">
    <property type="entry name" value="K_BOX"/>
    <property type="match status" value="1"/>
</dbReference>
<dbReference type="PROSITE" id="PS00350">
    <property type="entry name" value="MADS_BOX_1"/>
    <property type="match status" value="1"/>
</dbReference>
<dbReference type="PROSITE" id="PS50066">
    <property type="entry name" value="MADS_BOX_2"/>
    <property type="match status" value="1"/>
</dbReference>
<comment type="function">
    <text evidence="4 5 6">Probable transcription factor involved in the development of floral organs. Acts as C-class protein in association with MADS58. Involved in the control of lodicule number (whorl 2), stamen specification (whorl 3) and floral meristem determinacy (whorl 4), but not in the regulation of carpel morphogenesis. Plays a more predominant role in controlling lodicule development and in specifying stamen identity than MADS58.</text>
</comment>
<comment type="subcellular location">
    <subcellularLocation>
        <location evidence="9">Nucleus</location>
    </subcellularLocation>
</comment>
<comment type="alternative products">
    <event type="alternative splicing"/>
    <isoform>
        <id>Q40704-1</id>
        <name>1</name>
        <sequence type="displayed"/>
    </isoform>
    <isoform>
        <id>Q40704-2</id>
        <name>2</name>
        <sequence type="described" ref="VSP_017779"/>
    </isoform>
    <isoform>
        <id>Q40704-3</id>
        <name>3</name>
        <sequence type="described" ref="VSP_017777 VSP_017778"/>
    </isoform>
</comment>
<comment type="tissue specificity">
    <text evidence="3">Expressed in lemmas, paleas and lodicules.</text>
</comment>
<comment type="developmental stage">
    <text evidence="3 5">Expressed at early stage of flower development in stamen anlagen before stamen initiation, and at later stage in lodicule and ovule primordia initiation region.</text>
</comment>
<comment type="disruption phenotype">
    <text evidence="5">Homeotic transformation of stamens into lodicules, and ectopic development of lodicules where they do not form in the wild-type.</text>
</comment>
<comment type="miscellaneous">
    <text>The transformation of lodicules into stamens is observed in overexpressing plants.</text>
</comment>
<sequence>MGRGKIEIKRIENTTNRQVTFCKRRNGLLKKAYELSVLCDAEVALIVFSSRGRLYEYANNSVKSTVERYKKANSDTSNSGTVAEVNAQHYQQESSKLRQQISSLQNANSRTIVGDSINTMSLRDLKQVENRLEKGIAKIRARKNELLYAEVEYMQKREVELQNDNMYLRSKVVENERGQQPLNMMGAASTSEYDHMVNNPYDSRNFLQVNIMQQPQHYAHQLQPTTLQLGQQPAFN</sequence>